<reference key="1">
    <citation type="journal article" date="2008" name="Genomics">
        <title>Evolution in the laboratory: the genome of Halobacterium salinarum strain R1 compared to that of strain NRC-1.</title>
        <authorList>
            <person name="Pfeiffer F."/>
            <person name="Schuster S.C."/>
            <person name="Broicher A."/>
            <person name="Falb M."/>
            <person name="Palm P."/>
            <person name="Rodewald K."/>
            <person name="Ruepp A."/>
            <person name="Soppa J."/>
            <person name="Tittor J."/>
            <person name="Oesterhelt D."/>
        </authorList>
    </citation>
    <scope>NUCLEOTIDE SEQUENCE [LARGE SCALE GENOMIC DNA]</scope>
    <source>
        <strain>ATCC 29341 / DSM 671 / R1</strain>
    </source>
</reference>
<gene>
    <name evidence="1" type="primary">sucC</name>
    <name type="ordered locus">OE_3195F</name>
</gene>
<dbReference type="EC" id="6.2.1.5" evidence="1"/>
<dbReference type="EMBL" id="AM774415">
    <property type="protein sequence ID" value="CAP14112.1"/>
    <property type="molecule type" value="Genomic_DNA"/>
</dbReference>
<dbReference type="RefSeq" id="WP_012289349.1">
    <property type="nucleotide sequence ID" value="NC_010364.1"/>
</dbReference>
<dbReference type="SMR" id="B0R5U5"/>
<dbReference type="EnsemblBacteria" id="CAP14112">
    <property type="protein sequence ID" value="CAP14112"/>
    <property type="gene ID" value="OE_3195F"/>
</dbReference>
<dbReference type="GeneID" id="89349822"/>
<dbReference type="KEGG" id="hsl:OE_3195F"/>
<dbReference type="HOGENOM" id="CLU_037430_0_2_2"/>
<dbReference type="PhylomeDB" id="B0R5U5"/>
<dbReference type="UniPathway" id="UPA00223">
    <property type="reaction ID" value="UER00999"/>
</dbReference>
<dbReference type="Proteomes" id="UP000001321">
    <property type="component" value="Chromosome"/>
</dbReference>
<dbReference type="GO" id="GO:0042709">
    <property type="term" value="C:succinate-CoA ligase complex"/>
    <property type="evidence" value="ECO:0007669"/>
    <property type="project" value="TreeGrafter"/>
</dbReference>
<dbReference type="GO" id="GO:0005524">
    <property type="term" value="F:ATP binding"/>
    <property type="evidence" value="ECO:0007669"/>
    <property type="project" value="UniProtKB-UniRule"/>
</dbReference>
<dbReference type="GO" id="GO:0000287">
    <property type="term" value="F:magnesium ion binding"/>
    <property type="evidence" value="ECO:0007669"/>
    <property type="project" value="UniProtKB-UniRule"/>
</dbReference>
<dbReference type="GO" id="GO:0004775">
    <property type="term" value="F:succinate-CoA ligase (ADP-forming) activity"/>
    <property type="evidence" value="ECO:0007669"/>
    <property type="project" value="UniProtKB-UniRule"/>
</dbReference>
<dbReference type="GO" id="GO:0004776">
    <property type="term" value="F:succinate-CoA ligase (GDP-forming) activity"/>
    <property type="evidence" value="ECO:0007669"/>
    <property type="project" value="RHEA"/>
</dbReference>
<dbReference type="GO" id="GO:0006104">
    <property type="term" value="P:succinyl-CoA metabolic process"/>
    <property type="evidence" value="ECO:0007669"/>
    <property type="project" value="TreeGrafter"/>
</dbReference>
<dbReference type="GO" id="GO:0006099">
    <property type="term" value="P:tricarboxylic acid cycle"/>
    <property type="evidence" value="ECO:0007669"/>
    <property type="project" value="UniProtKB-UniRule"/>
</dbReference>
<dbReference type="FunFam" id="3.30.470.20:FF:000002">
    <property type="entry name" value="Succinate--CoA ligase [ADP-forming] subunit beta"/>
    <property type="match status" value="1"/>
</dbReference>
<dbReference type="FunFam" id="3.40.50.261:FF:000007">
    <property type="entry name" value="Succinate--CoA ligase [ADP-forming] subunit beta"/>
    <property type="match status" value="1"/>
</dbReference>
<dbReference type="Gene3D" id="3.30.1490.20">
    <property type="entry name" value="ATP-grasp fold, A domain"/>
    <property type="match status" value="1"/>
</dbReference>
<dbReference type="Gene3D" id="3.30.470.20">
    <property type="entry name" value="ATP-grasp fold, B domain"/>
    <property type="match status" value="1"/>
</dbReference>
<dbReference type="Gene3D" id="3.40.50.261">
    <property type="entry name" value="Succinyl-CoA synthetase domains"/>
    <property type="match status" value="1"/>
</dbReference>
<dbReference type="HAMAP" id="MF_00558">
    <property type="entry name" value="Succ_CoA_beta"/>
    <property type="match status" value="1"/>
</dbReference>
<dbReference type="InterPro" id="IPR011761">
    <property type="entry name" value="ATP-grasp"/>
</dbReference>
<dbReference type="InterPro" id="IPR013650">
    <property type="entry name" value="ATP-grasp_succ-CoA_synth-type"/>
</dbReference>
<dbReference type="InterPro" id="IPR013815">
    <property type="entry name" value="ATP_grasp_subdomain_1"/>
</dbReference>
<dbReference type="InterPro" id="IPR017866">
    <property type="entry name" value="Succ-CoA_synthase_bsu_CS"/>
</dbReference>
<dbReference type="InterPro" id="IPR005811">
    <property type="entry name" value="SUCC_ACL_C"/>
</dbReference>
<dbReference type="InterPro" id="IPR005809">
    <property type="entry name" value="Succ_CoA_ligase-like_bsu"/>
</dbReference>
<dbReference type="InterPro" id="IPR016102">
    <property type="entry name" value="Succinyl-CoA_synth-like"/>
</dbReference>
<dbReference type="NCBIfam" id="NF001913">
    <property type="entry name" value="PRK00696.1"/>
    <property type="match status" value="1"/>
</dbReference>
<dbReference type="NCBIfam" id="TIGR01016">
    <property type="entry name" value="sucCoAbeta"/>
    <property type="match status" value="1"/>
</dbReference>
<dbReference type="PANTHER" id="PTHR11815:SF10">
    <property type="entry name" value="SUCCINATE--COA LIGASE [GDP-FORMING] SUBUNIT BETA, MITOCHONDRIAL"/>
    <property type="match status" value="1"/>
</dbReference>
<dbReference type="PANTHER" id="PTHR11815">
    <property type="entry name" value="SUCCINYL-COA SYNTHETASE BETA CHAIN"/>
    <property type="match status" value="1"/>
</dbReference>
<dbReference type="Pfam" id="PF08442">
    <property type="entry name" value="ATP-grasp_2"/>
    <property type="match status" value="1"/>
</dbReference>
<dbReference type="Pfam" id="PF00549">
    <property type="entry name" value="Ligase_CoA"/>
    <property type="match status" value="1"/>
</dbReference>
<dbReference type="PIRSF" id="PIRSF001554">
    <property type="entry name" value="SucCS_beta"/>
    <property type="match status" value="1"/>
</dbReference>
<dbReference type="SUPFAM" id="SSF56059">
    <property type="entry name" value="Glutathione synthetase ATP-binding domain-like"/>
    <property type="match status" value="1"/>
</dbReference>
<dbReference type="SUPFAM" id="SSF52210">
    <property type="entry name" value="Succinyl-CoA synthetase domains"/>
    <property type="match status" value="1"/>
</dbReference>
<dbReference type="PROSITE" id="PS50975">
    <property type="entry name" value="ATP_GRASP"/>
    <property type="match status" value="1"/>
</dbReference>
<dbReference type="PROSITE" id="PS01217">
    <property type="entry name" value="SUCCINYL_COA_LIG_3"/>
    <property type="match status" value="1"/>
</dbReference>
<sequence length="382" mass="40795">MKLHEYQAKEVFADAGIPTPESALATSVDEAVEVADALDYPVAVKAQVHVGGRGKAGGIKLAENTAEAREAAESILGMDLKGYTVDRVLVEEAVDFTNELYVGVTMDRSEGAPVVMVSERGGVDIESVAEEAPEDIVREHVDPSFGLQAYQARNAVYDAGIEQDVAGDVAKIVQGVYDLWADSDATEVEINPVMVTSERDVVAADAVMKLDEDALFRQPAFADMEEDAAEDDLEAKANEYGFDYVRLDGNTGIIGNGAGLVMTTLDLVDYYGGQPANFLDIGGGAKADRVANALDMVFSDENVDSVVFNIFGGITRGDEVAKGINSALEQFDEIPTPVVVRLAGTNAAEGREILNDDLVTVEETLEGAVQRAVEYADEEDIQ</sequence>
<feature type="chain" id="PRO_1000129194" description="Succinate--CoA ligase [ADP-forming] subunit beta">
    <location>
        <begin position="1"/>
        <end position="382"/>
    </location>
</feature>
<feature type="domain" description="ATP-grasp" evidence="1">
    <location>
        <begin position="9"/>
        <end position="236"/>
    </location>
</feature>
<feature type="binding site" evidence="1">
    <location>
        <position position="45"/>
    </location>
    <ligand>
        <name>ATP</name>
        <dbReference type="ChEBI" id="CHEBI:30616"/>
    </ligand>
</feature>
<feature type="binding site" evidence="1">
    <location>
        <begin position="52"/>
        <end position="54"/>
    </location>
    <ligand>
        <name>ATP</name>
        <dbReference type="ChEBI" id="CHEBI:30616"/>
    </ligand>
</feature>
<feature type="binding site" evidence="1">
    <location>
        <position position="91"/>
    </location>
    <ligand>
        <name>ATP</name>
        <dbReference type="ChEBI" id="CHEBI:30616"/>
    </ligand>
</feature>
<feature type="binding site" evidence="1">
    <location>
        <position position="94"/>
    </location>
    <ligand>
        <name>ATP</name>
        <dbReference type="ChEBI" id="CHEBI:30616"/>
    </ligand>
</feature>
<feature type="binding site" evidence="1">
    <location>
        <position position="99"/>
    </location>
    <ligand>
        <name>ATP</name>
        <dbReference type="ChEBI" id="CHEBI:30616"/>
    </ligand>
</feature>
<feature type="binding site" evidence="1">
    <location>
        <position position="191"/>
    </location>
    <ligand>
        <name>Mg(2+)</name>
        <dbReference type="ChEBI" id="CHEBI:18420"/>
    </ligand>
</feature>
<feature type="binding site" evidence="1">
    <location>
        <position position="205"/>
    </location>
    <ligand>
        <name>Mg(2+)</name>
        <dbReference type="ChEBI" id="CHEBI:18420"/>
    </ligand>
</feature>
<feature type="binding site" evidence="1">
    <location>
        <position position="256"/>
    </location>
    <ligand>
        <name>substrate</name>
        <note>ligand shared with subunit alpha</note>
    </ligand>
</feature>
<feature type="binding site" evidence="1">
    <location>
        <begin position="313"/>
        <end position="315"/>
    </location>
    <ligand>
        <name>substrate</name>
        <note>ligand shared with subunit alpha</note>
    </ligand>
</feature>
<evidence type="ECO:0000255" key="1">
    <source>
        <dbReference type="HAMAP-Rule" id="MF_00558"/>
    </source>
</evidence>
<protein>
    <recommendedName>
        <fullName evidence="1">Succinate--CoA ligase [ADP-forming] subunit beta</fullName>
        <ecNumber evidence="1">6.2.1.5</ecNumber>
    </recommendedName>
    <alternativeName>
        <fullName evidence="1">Succinyl-CoA synthetase subunit beta</fullName>
        <shortName evidence="1">SCS-beta</shortName>
    </alternativeName>
</protein>
<accession>B0R5U5</accession>
<keyword id="KW-0067">ATP-binding</keyword>
<keyword id="KW-0436">Ligase</keyword>
<keyword id="KW-0460">Magnesium</keyword>
<keyword id="KW-0479">Metal-binding</keyword>
<keyword id="KW-0547">Nucleotide-binding</keyword>
<keyword id="KW-0816">Tricarboxylic acid cycle</keyword>
<comment type="function">
    <text evidence="1">Succinyl-CoA synthetase functions in the citric acid cycle (TCA), coupling the hydrolysis of succinyl-CoA to the synthesis of either ATP or GTP and thus represents the only step of substrate-level phosphorylation in the TCA. The beta subunit provides nucleotide specificity of the enzyme and binds the substrate succinate, while the binding sites for coenzyme A and phosphate are found in the alpha subunit.</text>
</comment>
<comment type="catalytic activity">
    <reaction evidence="1">
        <text>succinate + ATP + CoA = succinyl-CoA + ADP + phosphate</text>
        <dbReference type="Rhea" id="RHEA:17661"/>
        <dbReference type="ChEBI" id="CHEBI:30031"/>
        <dbReference type="ChEBI" id="CHEBI:30616"/>
        <dbReference type="ChEBI" id="CHEBI:43474"/>
        <dbReference type="ChEBI" id="CHEBI:57287"/>
        <dbReference type="ChEBI" id="CHEBI:57292"/>
        <dbReference type="ChEBI" id="CHEBI:456216"/>
        <dbReference type="EC" id="6.2.1.5"/>
    </reaction>
    <physiologicalReaction direction="right-to-left" evidence="1">
        <dbReference type="Rhea" id="RHEA:17663"/>
    </physiologicalReaction>
</comment>
<comment type="catalytic activity">
    <reaction evidence="1">
        <text>GTP + succinate + CoA = succinyl-CoA + GDP + phosphate</text>
        <dbReference type="Rhea" id="RHEA:22120"/>
        <dbReference type="ChEBI" id="CHEBI:30031"/>
        <dbReference type="ChEBI" id="CHEBI:37565"/>
        <dbReference type="ChEBI" id="CHEBI:43474"/>
        <dbReference type="ChEBI" id="CHEBI:57287"/>
        <dbReference type="ChEBI" id="CHEBI:57292"/>
        <dbReference type="ChEBI" id="CHEBI:58189"/>
    </reaction>
    <physiologicalReaction direction="right-to-left" evidence="1">
        <dbReference type="Rhea" id="RHEA:22122"/>
    </physiologicalReaction>
</comment>
<comment type="cofactor">
    <cofactor evidence="1">
        <name>Mg(2+)</name>
        <dbReference type="ChEBI" id="CHEBI:18420"/>
    </cofactor>
    <text evidence="1">Binds 1 Mg(2+) ion per subunit.</text>
</comment>
<comment type="pathway">
    <text evidence="1">Carbohydrate metabolism; tricarboxylic acid cycle; succinate from succinyl-CoA (ligase route): step 1/1.</text>
</comment>
<comment type="subunit">
    <text evidence="1">Heterotetramer of two alpha and two beta subunits.</text>
</comment>
<comment type="similarity">
    <text evidence="1">Belongs to the succinate/malate CoA ligase beta subunit family.</text>
</comment>
<proteinExistence type="inferred from homology"/>
<name>SUCC_HALS3</name>
<organism>
    <name type="scientific">Halobacterium salinarum (strain ATCC 29341 / DSM 671 / R1)</name>
    <dbReference type="NCBI Taxonomy" id="478009"/>
    <lineage>
        <taxon>Archaea</taxon>
        <taxon>Methanobacteriati</taxon>
        <taxon>Methanobacteriota</taxon>
        <taxon>Stenosarchaea group</taxon>
        <taxon>Halobacteria</taxon>
        <taxon>Halobacteriales</taxon>
        <taxon>Halobacteriaceae</taxon>
        <taxon>Halobacterium</taxon>
        <taxon>Halobacterium salinarum NRC-34001</taxon>
    </lineage>
</organism>